<accession>Q0ZIW9</accession>
<organism>
    <name type="scientific">Vitis vinifera</name>
    <name type="common">Grape</name>
    <dbReference type="NCBI Taxonomy" id="29760"/>
    <lineage>
        <taxon>Eukaryota</taxon>
        <taxon>Viridiplantae</taxon>
        <taxon>Streptophyta</taxon>
        <taxon>Embryophyta</taxon>
        <taxon>Tracheophyta</taxon>
        <taxon>Spermatophyta</taxon>
        <taxon>Magnoliopsida</taxon>
        <taxon>eudicotyledons</taxon>
        <taxon>Gunneridae</taxon>
        <taxon>Pentapetalae</taxon>
        <taxon>rosids</taxon>
        <taxon>Vitales</taxon>
        <taxon>Vitaceae</taxon>
        <taxon>Viteae</taxon>
        <taxon>Vitis</taxon>
    </lineage>
</organism>
<dbReference type="EMBL" id="DQ424856">
    <property type="protein sequence ID" value="ABE47584.1"/>
    <property type="molecule type" value="Genomic_DNA"/>
</dbReference>
<dbReference type="RefSeq" id="YP_567127.1">
    <property type="nucleotide sequence ID" value="NC_007957.1"/>
</dbReference>
<dbReference type="SMR" id="Q0ZIW9"/>
<dbReference type="FunCoup" id="Q0ZIW9">
    <property type="interactions" value="14"/>
</dbReference>
<dbReference type="STRING" id="29760.Q0ZIW9"/>
<dbReference type="PaxDb" id="29760-VIT_00s0246g00170.t01"/>
<dbReference type="GeneID" id="4025038"/>
<dbReference type="KEGG" id="vvi:4025038"/>
<dbReference type="eggNOG" id="ENOG502QU0T">
    <property type="taxonomic scope" value="Eukaryota"/>
</dbReference>
<dbReference type="InParanoid" id="Q0ZIW9"/>
<dbReference type="OrthoDB" id="861130at71240"/>
<dbReference type="Proteomes" id="UP000009183">
    <property type="component" value="Chloroplast"/>
</dbReference>
<dbReference type="ExpressionAtlas" id="Q0ZIW9">
    <property type="expression patterns" value="baseline and differential"/>
</dbReference>
<dbReference type="GO" id="GO:0009535">
    <property type="term" value="C:chloroplast thylakoid membrane"/>
    <property type="evidence" value="ECO:0007669"/>
    <property type="project" value="UniProtKB-SubCell"/>
</dbReference>
<dbReference type="GO" id="GO:0020037">
    <property type="term" value="F:heme binding"/>
    <property type="evidence" value="ECO:0007669"/>
    <property type="project" value="InterPro"/>
</dbReference>
<dbReference type="GO" id="GO:0017004">
    <property type="term" value="P:cytochrome complex assembly"/>
    <property type="evidence" value="ECO:0007669"/>
    <property type="project" value="UniProtKB-UniRule"/>
</dbReference>
<dbReference type="HAMAP" id="MF_01391">
    <property type="entry name" value="CytC_CcsA"/>
    <property type="match status" value="1"/>
</dbReference>
<dbReference type="InterPro" id="IPR002541">
    <property type="entry name" value="Cyt_c_assembly"/>
</dbReference>
<dbReference type="InterPro" id="IPR017562">
    <property type="entry name" value="Cyt_c_biogenesis_CcsA"/>
</dbReference>
<dbReference type="InterPro" id="IPR045062">
    <property type="entry name" value="Cyt_c_biogenesis_CcsA/CcmC"/>
</dbReference>
<dbReference type="NCBIfam" id="TIGR03144">
    <property type="entry name" value="cytochr_II_ccsB"/>
    <property type="match status" value="1"/>
</dbReference>
<dbReference type="PANTHER" id="PTHR30071:SF1">
    <property type="entry name" value="CYTOCHROME B_B6 PROTEIN-RELATED"/>
    <property type="match status" value="1"/>
</dbReference>
<dbReference type="PANTHER" id="PTHR30071">
    <property type="entry name" value="HEME EXPORTER PROTEIN C"/>
    <property type="match status" value="1"/>
</dbReference>
<dbReference type="Pfam" id="PF01578">
    <property type="entry name" value="Cytochrom_C_asm"/>
    <property type="match status" value="1"/>
</dbReference>
<keyword id="KW-0150">Chloroplast</keyword>
<keyword id="KW-0201">Cytochrome c-type biogenesis</keyword>
<keyword id="KW-0472">Membrane</keyword>
<keyword id="KW-0934">Plastid</keyword>
<keyword id="KW-1185">Reference proteome</keyword>
<keyword id="KW-0793">Thylakoid</keyword>
<keyword id="KW-0812">Transmembrane</keyword>
<keyword id="KW-1133">Transmembrane helix</keyword>
<evidence type="ECO:0000255" key="1">
    <source>
        <dbReference type="HAMAP-Rule" id="MF_01391"/>
    </source>
</evidence>
<reference key="1">
    <citation type="journal article" date="2006" name="BMC Evol. Biol.">
        <title>Phylogenetic analyses of Vitis (Vitaceae) based on complete chloroplast genome sequences: effects of taxon sampling and phylogenetic methods on resolving relationships among rosids.</title>
        <authorList>
            <person name="Jansen R.K."/>
            <person name="Kaittanis C."/>
            <person name="Lee S.-B."/>
            <person name="Saski C."/>
            <person name="Tomkins J."/>
            <person name="Alverson A.J."/>
            <person name="Daniell H."/>
        </authorList>
    </citation>
    <scope>NUCLEOTIDE SEQUENCE [LARGE SCALE GENOMIC DNA]</scope>
    <source>
        <strain>cv. Maxxa</strain>
    </source>
</reference>
<name>CCSA_VITVI</name>
<feature type="chain" id="PRO_0000353793" description="Cytochrome c biogenesis protein CcsA">
    <location>
        <begin position="1"/>
        <end position="322"/>
    </location>
</feature>
<feature type="transmembrane region" description="Helical" evidence="1">
    <location>
        <begin position="17"/>
        <end position="37"/>
    </location>
</feature>
<feature type="transmembrane region" description="Helical" evidence="1">
    <location>
        <begin position="44"/>
        <end position="64"/>
    </location>
</feature>
<feature type="transmembrane region" description="Helical" evidence="1">
    <location>
        <begin position="71"/>
        <end position="91"/>
    </location>
</feature>
<feature type="transmembrane region" description="Helical" evidence="1">
    <location>
        <begin position="98"/>
        <end position="118"/>
    </location>
</feature>
<feature type="transmembrane region" description="Helical" evidence="1">
    <location>
        <begin position="143"/>
        <end position="163"/>
    </location>
</feature>
<feature type="transmembrane region" description="Helical" evidence="1">
    <location>
        <begin position="225"/>
        <end position="245"/>
    </location>
</feature>
<feature type="transmembrane region" description="Helical" evidence="1">
    <location>
        <begin position="258"/>
        <end position="273"/>
    </location>
</feature>
<feature type="transmembrane region" description="Helical" evidence="1">
    <location>
        <begin position="286"/>
        <end position="306"/>
    </location>
</feature>
<gene>
    <name evidence="1" type="primary">ccsA</name>
</gene>
<geneLocation type="chloroplast"/>
<sequence length="322" mass="36641">MIFSTLEHILTHISFSVVSIVITIHLITLLVDEIVGLSDSSEKGMIATFFCITGLLVTRWIYLGHFPLSDLYESLIFLSWSFSIIHIVPYFKKHKNHLSALTAPSAIFTQGFATSGLLTEMHQSEILVPALQSQWLMMHVSMMVLGYAALLCGSLLSVALLVITFRQDIRILCKNNHFLNKSFSFDEIQYMNKGNNVLQNTSFLSVRNYYRAQFIQQLDHWSYRVISLGFLFLTIGILSGAVWANEAWGSYWNWDPKETWAFITWTIFAIYLHTRTNKNLQVANSAIVASMGFLIIWICYFGVNLLGIGLHSYGSFTFSSNL</sequence>
<comment type="function">
    <text evidence="1">Required during biogenesis of c-type cytochromes (cytochrome c6 and cytochrome f) at the step of heme attachment.</text>
</comment>
<comment type="subunit">
    <text evidence="1">May interact with Ccs1.</text>
</comment>
<comment type="subcellular location">
    <subcellularLocation>
        <location evidence="1">Plastid</location>
        <location evidence="1">Chloroplast thylakoid membrane</location>
        <topology evidence="1">Multi-pass membrane protein</topology>
    </subcellularLocation>
</comment>
<comment type="similarity">
    <text evidence="1">Belongs to the CcmF/CycK/Ccl1/NrfE/CcsA family.</text>
</comment>
<proteinExistence type="inferred from homology"/>
<protein>
    <recommendedName>
        <fullName evidence="1">Cytochrome c biogenesis protein CcsA</fullName>
    </recommendedName>
</protein>